<evidence type="ECO:0000250" key="1">
    <source>
        <dbReference type="UniProtKB" id="P00403"/>
    </source>
</evidence>
<evidence type="ECO:0000250" key="2">
    <source>
        <dbReference type="UniProtKB" id="P00410"/>
    </source>
</evidence>
<evidence type="ECO:0000250" key="3">
    <source>
        <dbReference type="UniProtKB" id="P68530"/>
    </source>
</evidence>
<evidence type="ECO:0000305" key="4"/>
<accession>P26456</accession>
<protein>
    <recommendedName>
        <fullName>Cytochrome c oxidase subunit 2</fullName>
        <ecNumber>7.1.1.9</ecNumber>
    </recommendedName>
    <alternativeName>
        <fullName>Cytochrome c oxidase polypeptide II</fullName>
    </alternativeName>
</protein>
<comment type="function">
    <text evidence="2">Component of the cytochrome c oxidase, the last enzyme in the mitochondrial electron transport chain which drives oxidative phosphorylation. The respiratory chain contains 3 multisubunit complexes succinate dehydrogenase (complex II, CII), ubiquinol-cytochrome c oxidoreductase (cytochrome b-c1 complex, complex III, CIII) and cytochrome c oxidase (complex IV, CIV), that cooperate to transfer electrons derived from NADH and succinate to molecular oxygen, creating an electrochemical gradient over the inner membrane that drives transmembrane transport and the ATP synthase. Cytochrome c oxidase is the component of the respiratory chain that catalyzes the reduction of oxygen to water. Electrons originating from reduced cytochrome c in the intermembrane space (IMS) are transferred via the dinuclear copper A center (CU(A)) of subunit 2 and heme A of subunit 1 to the active site in subunit 1, a binuclear center (BNC) formed by heme A3 and copper B (CU(B)). The BNC reduces molecular oxygen to 2 water molecules using 4 electrons from cytochrome c in the IMS and 4 protons from the mitochondrial matrix.</text>
</comment>
<comment type="catalytic activity">
    <reaction evidence="2">
        <text>4 Fe(II)-[cytochrome c] + O2 + 8 H(+)(in) = 4 Fe(III)-[cytochrome c] + 2 H2O + 4 H(+)(out)</text>
        <dbReference type="Rhea" id="RHEA:11436"/>
        <dbReference type="Rhea" id="RHEA-COMP:10350"/>
        <dbReference type="Rhea" id="RHEA-COMP:14399"/>
        <dbReference type="ChEBI" id="CHEBI:15377"/>
        <dbReference type="ChEBI" id="CHEBI:15378"/>
        <dbReference type="ChEBI" id="CHEBI:15379"/>
        <dbReference type="ChEBI" id="CHEBI:29033"/>
        <dbReference type="ChEBI" id="CHEBI:29034"/>
        <dbReference type="EC" id="7.1.1.9"/>
    </reaction>
    <physiologicalReaction direction="left-to-right" evidence="2">
        <dbReference type="Rhea" id="RHEA:11437"/>
    </physiologicalReaction>
</comment>
<comment type="cofactor">
    <cofactor evidence="3">
        <name>Cu cation</name>
        <dbReference type="ChEBI" id="CHEBI:23378"/>
    </cofactor>
    <text evidence="3">Binds a dinuclear copper A center per subunit.</text>
</comment>
<comment type="subunit">
    <text evidence="1 3">Component of the cytochrome c oxidase (complex IV, CIV), a multisubunit enzyme composed of 14 subunits. The complex is composed of a catalytic core of 3 subunits MT-CO1, MT-CO2 and MT-CO3, encoded in the mitochondrial DNA, and 11 supernumerary subunits COX4I, COX5A, COX5B, COX6A, COX6B, COX6C, COX7A, COX7B, COX7C, COX8 and NDUFA4, which are encoded in the nuclear genome. The complex exists as a monomer or a dimer and forms supercomplexes (SCs) in the inner mitochondrial membrane with NADH-ubiquinone oxidoreductase (complex I, CI) and ubiquinol-cytochrome c oxidoreductase (cytochrome b-c1 complex, complex III, CIII), resulting in different assemblies (supercomplex SCI(1)III(2)IV(1) and megacomplex MCI(2)III(2)IV(2)) (By similarity). Found in a complex with TMEM177, COA6, COX18, COX20, SCO1 and SCO2. Interacts with TMEM177 in a COX20-dependent manner. Interacts with COX20. Interacts with COX16 (By similarity).</text>
</comment>
<comment type="subcellular location">
    <subcellularLocation>
        <location evidence="3">Mitochondrion inner membrane</location>
        <topology evidence="3">Multi-pass membrane protein</topology>
    </subcellularLocation>
</comment>
<comment type="similarity">
    <text evidence="4">Belongs to the cytochrome c oxidase subunit 2 family.</text>
</comment>
<name>COX2_GORGO</name>
<proteinExistence type="inferred from homology"/>
<sequence>MAHAAQVGLQDATSPIMEELITFHDHALMIIFLICFLVLYALFLTLTTKLTSTNISDAQEMETIWTILPAIILVLIALPSLRILYMTDEINDPSFTIKSIGHQWYWTYEYTDYGGLIFNSYMLPPLFLEPGDLRLLDVDNRVVLPVEAPVRMMITSQDVLHSWAVPTLGLKTDAIPGRLNQTTFTATRPGVYYGQCSEICGANHSFMPIVLELIPLKIFEMGPVFAL</sequence>
<gene>
    <name type="primary">MT-CO2</name>
    <name type="synonym">COII</name>
    <name type="synonym">COX2</name>
    <name type="synonym">COXII</name>
    <name type="synonym">MTCO2</name>
</gene>
<organism>
    <name type="scientific">Gorilla gorilla gorilla</name>
    <name type="common">Western lowland gorilla</name>
    <dbReference type="NCBI Taxonomy" id="9595"/>
    <lineage>
        <taxon>Eukaryota</taxon>
        <taxon>Metazoa</taxon>
        <taxon>Chordata</taxon>
        <taxon>Craniata</taxon>
        <taxon>Vertebrata</taxon>
        <taxon>Euteleostomi</taxon>
        <taxon>Mammalia</taxon>
        <taxon>Eutheria</taxon>
        <taxon>Euarchontoglires</taxon>
        <taxon>Primates</taxon>
        <taxon>Haplorrhini</taxon>
        <taxon>Catarrhini</taxon>
        <taxon>Hominidae</taxon>
        <taxon>Gorilla</taxon>
    </lineage>
</organism>
<reference key="1">
    <citation type="journal article" date="1991" name="Proc. Natl. Acad. Sci. U.S.A.">
        <title>Resolution of the African hominoid trichotomy by use of a mitochondrial gene sequence.</title>
        <authorList>
            <person name="Ruvolo M."/>
            <person name="Disotell T.R."/>
            <person name="Allard M.W."/>
            <person name="Brown W.M."/>
            <person name="Honeycutt R.L."/>
        </authorList>
    </citation>
    <scope>NUCLEOTIDE SEQUENCE [GENOMIC DNA]</scope>
</reference>
<reference key="2">
    <citation type="journal article" date="1994" name="Proc. Natl. Acad. Sci. U.S.A.">
        <title>Gene trees and hominoid phylogeny.</title>
        <authorList>
            <person name="Ruvolo M."/>
            <person name="Pan D."/>
            <person name="Zehr S."/>
            <person name="Goldberg T."/>
            <person name="Disotell T.R."/>
            <person name="von Dornum M."/>
        </authorList>
    </citation>
    <scope>NUCLEOTIDE SEQUENCE [GENOMIC DNA]</scope>
</reference>
<reference key="3">
    <citation type="journal article" date="1995" name="Proc. Natl. Acad. Sci. U.S.A.">
        <title>Recent African origin of modern humans revealed by complete sequences of hominoid mitochondrial DNAs.</title>
        <authorList>
            <person name="Horai S."/>
            <person name="Hayasaka K."/>
            <person name="Kondo R."/>
            <person name="Tsugane K."/>
            <person name="Takahata N."/>
        </authorList>
    </citation>
    <scope>NUCLEOTIDE SEQUENCE [GENOMIC DNA]</scope>
</reference>
<feature type="chain" id="PRO_0000183605" description="Cytochrome c oxidase subunit 2">
    <location>
        <begin position="1"/>
        <end position="227"/>
    </location>
</feature>
<feature type="topological domain" description="Mitochondrial intermembrane" evidence="3">
    <location>
        <begin position="1"/>
        <end position="14"/>
    </location>
</feature>
<feature type="transmembrane region" description="Helical; Name=I" evidence="3">
    <location>
        <begin position="15"/>
        <end position="45"/>
    </location>
</feature>
<feature type="topological domain" description="Mitochondrial matrix" evidence="3">
    <location>
        <begin position="46"/>
        <end position="59"/>
    </location>
</feature>
<feature type="transmembrane region" description="Helical; Name=II" evidence="3">
    <location>
        <begin position="60"/>
        <end position="87"/>
    </location>
</feature>
<feature type="topological domain" description="Mitochondrial intermembrane" evidence="3">
    <location>
        <begin position="88"/>
        <end position="227"/>
    </location>
</feature>
<feature type="binding site" evidence="3">
    <location>
        <position position="161"/>
    </location>
    <ligand>
        <name>Cu cation</name>
        <dbReference type="ChEBI" id="CHEBI:23378"/>
        <label>A1</label>
    </ligand>
</feature>
<feature type="binding site" evidence="3">
    <location>
        <position position="196"/>
    </location>
    <ligand>
        <name>Cu cation</name>
        <dbReference type="ChEBI" id="CHEBI:23378"/>
        <label>A1</label>
    </ligand>
</feature>
<feature type="binding site" evidence="3">
    <location>
        <position position="196"/>
    </location>
    <ligand>
        <name>Cu cation</name>
        <dbReference type="ChEBI" id="CHEBI:23378"/>
        <label>A2</label>
    </ligand>
</feature>
<feature type="binding site" evidence="3">
    <location>
        <position position="198"/>
    </location>
    <ligand>
        <name>Cu cation</name>
        <dbReference type="ChEBI" id="CHEBI:23378"/>
        <label>A2</label>
    </ligand>
</feature>
<feature type="binding site" evidence="3">
    <location>
        <position position="198"/>
    </location>
    <ligand>
        <name>Mg(2+)</name>
        <dbReference type="ChEBI" id="CHEBI:18420"/>
        <note>ligand shared with MT-CO1</note>
    </ligand>
</feature>
<feature type="binding site" evidence="3">
    <location>
        <position position="200"/>
    </location>
    <ligand>
        <name>Cu cation</name>
        <dbReference type="ChEBI" id="CHEBI:23378"/>
        <label>A1</label>
    </ligand>
</feature>
<feature type="binding site" evidence="3">
    <location>
        <position position="200"/>
    </location>
    <ligand>
        <name>Cu cation</name>
        <dbReference type="ChEBI" id="CHEBI:23378"/>
        <label>A2</label>
    </ligand>
</feature>
<feature type="binding site" evidence="3">
    <location>
        <position position="204"/>
    </location>
    <ligand>
        <name>Cu cation</name>
        <dbReference type="ChEBI" id="CHEBI:23378"/>
        <label>A2</label>
    </ligand>
</feature>
<feature type="binding site" evidence="3">
    <location>
        <position position="207"/>
    </location>
    <ligand>
        <name>Cu cation</name>
        <dbReference type="ChEBI" id="CHEBI:23378"/>
        <label>A1</label>
    </ligand>
</feature>
<feature type="sequence conflict" description="In Ref. 3; BAA07303." evidence="4" ref="3">
    <original>T</original>
    <variation>I</variation>
    <location>
        <position position="22"/>
    </location>
</feature>
<feature type="sequence conflict" description="In Ref. 3; BAA07303." evidence="4" ref="3">
    <original>ST</original>
    <variation>NN</variation>
    <location>
        <begin position="52"/>
        <end position="53"/>
    </location>
</feature>
<dbReference type="EC" id="7.1.1.9"/>
<dbReference type="EMBL" id="M58006">
    <property type="protein sequence ID" value="AAA31802.1"/>
    <property type="molecule type" value="Genomic_DNA"/>
</dbReference>
<dbReference type="EMBL" id="U12698">
    <property type="protein sequence ID" value="AAA61407.1"/>
    <property type="molecule type" value="Genomic_DNA"/>
</dbReference>
<dbReference type="EMBL" id="D38114">
    <property type="protein sequence ID" value="BAA07303.1"/>
    <property type="molecule type" value="Genomic_DNA"/>
</dbReference>
<dbReference type="PIR" id="I37028">
    <property type="entry name" value="I37028"/>
</dbReference>
<dbReference type="PIR" id="T14023">
    <property type="entry name" value="T14023"/>
</dbReference>
<dbReference type="RefSeq" id="NP_008215.1">
    <property type="nucleotide sequence ID" value="NC_001645.1"/>
</dbReference>
<dbReference type="SMR" id="P26456"/>
<dbReference type="FunCoup" id="P26456">
    <property type="interactions" value="226"/>
</dbReference>
<dbReference type="STRING" id="9593.ENSGGOP00000020982"/>
<dbReference type="GeneID" id="807894"/>
<dbReference type="CTD" id="4513"/>
<dbReference type="eggNOG" id="KOG4767">
    <property type="taxonomic scope" value="Eukaryota"/>
</dbReference>
<dbReference type="InParanoid" id="P26456"/>
<dbReference type="Proteomes" id="UP000001519">
    <property type="component" value="Mitochondrion"/>
</dbReference>
<dbReference type="GO" id="GO:0005743">
    <property type="term" value="C:mitochondrial inner membrane"/>
    <property type="evidence" value="ECO:0007669"/>
    <property type="project" value="UniProtKB-SubCell"/>
</dbReference>
<dbReference type="GO" id="GO:0045277">
    <property type="term" value="C:respiratory chain complex IV"/>
    <property type="evidence" value="ECO:0000250"/>
    <property type="project" value="UniProtKB"/>
</dbReference>
<dbReference type="GO" id="GO:0005507">
    <property type="term" value="F:copper ion binding"/>
    <property type="evidence" value="ECO:0007669"/>
    <property type="project" value="InterPro"/>
</dbReference>
<dbReference type="GO" id="GO:0004129">
    <property type="term" value="F:cytochrome-c oxidase activity"/>
    <property type="evidence" value="ECO:0007669"/>
    <property type="project" value="UniProtKB-EC"/>
</dbReference>
<dbReference type="GO" id="GO:0042773">
    <property type="term" value="P:ATP synthesis coupled electron transport"/>
    <property type="evidence" value="ECO:0000318"/>
    <property type="project" value="GO_Central"/>
</dbReference>
<dbReference type="CDD" id="cd13912">
    <property type="entry name" value="CcO_II_C"/>
    <property type="match status" value="1"/>
</dbReference>
<dbReference type="FunFam" id="1.10.287.90:FF:000001">
    <property type="entry name" value="Cytochrome c oxidase subunit 2"/>
    <property type="match status" value="1"/>
</dbReference>
<dbReference type="FunFam" id="2.60.40.420:FF:000001">
    <property type="entry name" value="Cytochrome c oxidase subunit 2"/>
    <property type="match status" value="1"/>
</dbReference>
<dbReference type="Gene3D" id="1.10.287.90">
    <property type="match status" value="1"/>
</dbReference>
<dbReference type="Gene3D" id="2.60.40.420">
    <property type="entry name" value="Cupredoxins - blue copper proteins"/>
    <property type="match status" value="1"/>
</dbReference>
<dbReference type="InterPro" id="IPR045187">
    <property type="entry name" value="CcO_II"/>
</dbReference>
<dbReference type="InterPro" id="IPR002429">
    <property type="entry name" value="CcO_II-like_C"/>
</dbReference>
<dbReference type="InterPro" id="IPR034210">
    <property type="entry name" value="CcO_II_C"/>
</dbReference>
<dbReference type="InterPro" id="IPR001505">
    <property type="entry name" value="Copper_CuA"/>
</dbReference>
<dbReference type="InterPro" id="IPR008972">
    <property type="entry name" value="Cupredoxin"/>
</dbReference>
<dbReference type="InterPro" id="IPR014222">
    <property type="entry name" value="Cyt_c_oxidase_su2"/>
</dbReference>
<dbReference type="InterPro" id="IPR011759">
    <property type="entry name" value="Cyt_c_oxidase_su2_TM_dom"/>
</dbReference>
<dbReference type="InterPro" id="IPR036257">
    <property type="entry name" value="Cyt_c_oxidase_su2_TM_sf"/>
</dbReference>
<dbReference type="NCBIfam" id="TIGR02866">
    <property type="entry name" value="CoxB"/>
    <property type="match status" value="1"/>
</dbReference>
<dbReference type="PANTHER" id="PTHR22888:SF9">
    <property type="entry name" value="CYTOCHROME C OXIDASE SUBUNIT 2"/>
    <property type="match status" value="1"/>
</dbReference>
<dbReference type="PANTHER" id="PTHR22888">
    <property type="entry name" value="CYTOCHROME C OXIDASE, SUBUNIT II"/>
    <property type="match status" value="1"/>
</dbReference>
<dbReference type="Pfam" id="PF00116">
    <property type="entry name" value="COX2"/>
    <property type="match status" value="1"/>
</dbReference>
<dbReference type="Pfam" id="PF02790">
    <property type="entry name" value="COX2_TM"/>
    <property type="match status" value="1"/>
</dbReference>
<dbReference type="PRINTS" id="PR01166">
    <property type="entry name" value="CYCOXIDASEII"/>
</dbReference>
<dbReference type="SUPFAM" id="SSF49503">
    <property type="entry name" value="Cupredoxins"/>
    <property type="match status" value="1"/>
</dbReference>
<dbReference type="SUPFAM" id="SSF81464">
    <property type="entry name" value="Cytochrome c oxidase subunit II-like, transmembrane region"/>
    <property type="match status" value="1"/>
</dbReference>
<dbReference type="PROSITE" id="PS00078">
    <property type="entry name" value="COX2"/>
    <property type="match status" value="1"/>
</dbReference>
<dbReference type="PROSITE" id="PS50857">
    <property type="entry name" value="COX2_CUA"/>
    <property type="match status" value="1"/>
</dbReference>
<dbReference type="PROSITE" id="PS50999">
    <property type="entry name" value="COX2_TM"/>
    <property type="match status" value="1"/>
</dbReference>
<geneLocation type="mitochondrion"/>
<keyword id="KW-0186">Copper</keyword>
<keyword id="KW-0249">Electron transport</keyword>
<keyword id="KW-0460">Magnesium</keyword>
<keyword id="KW-0472">Membrane</keyword>
<keyword id="KW-0479">Metal-binding</keyword>
<keyword id="KW-0496">Mitochondrion</keyword>
<keyword id="KW-0999">Mitochondrion inner membrane</keyword>
<keyword id="KW-1185">Reference proteome</keyword>
<keyword id="KW-0679">Respiratory chain</keyword>
<keyword id="KW-1278">Translocase</keyword>
<keyword id="KW-0812">Transmembrane</keyword>
<keyword id="KW-1133">Transmembrane helix</keyword>
<keyword id="KW-0813">Transport</keyword>